<sequence length="130" mass="14075">MARNRSSRTKKRKKLNIDRGVVHIKSTFNNTIITLSDLDGNTILWASGGTVGYSGSKKSTPYAAQLAADKIAKEALKLGLTRVSIEVKGPGAGREAAIRTIQAAGLVVDSIKDITPIPHNGCRPRRRRRV</sequence>
<dbReference type="EMBL" id="CP001634">
    <property type="protein sequence ID" value="ACR80557.1"/>
    <property type="molecule type" value="Genomic_DNA"/>
</dbReference>
<dbReference type="RefSeq" id="WP_015869200.1">
    <property type="nucleotide sequence ID" value="NC_012785.1"/>
</dbReference>
<dbReference type="SMR" id="C5CGH6"/>
<dbReference type="STRING" id="521045.Kole_1876"/>
<dbReference type="KEGG" id="kol:Kole_1876"/>
<dbReference type="eggNOG" id="COG0100">
    <property type="taxonomic scope" value="Bacteria"/>
</dbReference>
<dbReference type="HOGENOM" id="CLU_072439_5_0_0"/>
<dbReference type="OrthoDB" id="9806415at2"/>
<dbReference type="Proteomes" id="UP000002382">
    <property type="component" value="Chromosome"/>
</dbReference>
<dbReference type="GO" id="GO:1990904">
    <property type="term" value="C:ribonucleoprotein complex"/>
    <property type="evidence" value="ECO:0007669"/>
    <property type="project" value="UniProtKB-KW"/>
</dbReference>
<dbReference type="GO" id="GO:0005840">
    <property type="term" value="C:ribosome"/>
    <property type="evidence" value="ECO:0007669"/>
    <property type="project" value="UniProtKB-KW"/>
</dbReference>
<dbReference type="GO" id="GO:0019843">
    <property type="term" value="F:rRNA binding"/>
    <property type="evidence" value="ECO:0007669"/>
    <property type="project" value="UniProtKB-UniRule"/>
</dbReference>
<dbReference type="GO" id="GO:0003735">
    <property type="term" value="F:structural constituent of ribosome"/>
    <property type="evidence" value="ECO:0007669"/>
    <property type="project" value="InterPro"/>
</dbReference>
<dbReference type="GO" id="GO:0006412">
    <property type="term" value="P:translation"/>
    <property type="evidence" value="ECO:0007669"/>
    <property type="project" value="UniProtKB-UniRule"/>
</dbReference>
<dbReference type="FunFam" id="3.30.420.80:FF:000010">
    <property type="entry name" value="30S ribosomal protein S11"/>
    <property type="match status" value="1"/>
</dbReference>
<dbReference type="Gene3D" id="3.30.420.80">
    <property type="entry name" value="Ribosomal protein S11"/>
    <property type="match status" value="1"/>
</dbReference>
<dbReference type="HAMAP" id="MF_01310">
    <property type="entry name" value="Ribosomal_uS11"/>
    <property type="match status" value="1"/>
</dbReference>
<dbReference type="InterPro" id="IPR001971">
    <property type="entry name" value="Ribosomal_uS11"/>
</dbReference>
<dbReference type="InterPro" id="IPR019981">
    <property type="entry name" value="Ribosomal_uS11_bac-type"/>
</dbReference>
<dbReference type="InterPro" id="IPR018102">
    <property type="entry name" value="Ribosomal_uS11_CS"/>
</dbReference>
<dbReference type="InterPro" id="IPR036967">
    <property type="entry name" value="Ribosomal_uS11_sf"/>
</dbReference>
<dbReference type="NCBIfam" id="NF003698">
    <property type="entry name" value="PRK05309.1"/>
    <property type="match status" value="1"/>
</dbReference>
<dbReference type="NCBIfam" id="TIGR03632">
    <property type="entry name" value="uS11_bact"/>
    <property type="match status" value="1"/>
</dbReference>
<dbReference type="PANTHER" id="PTHR11759">
    <property type="entry name" value="40S RIBOSOMAL PROTEIN S14/30S RIBOSOMAL PROTEIN S11"/>
    <property type="match status" value="1"/>
</dbReference>
<dbReference type="Pfam" id="PF00411">
    <property type="entry name" value="Ribosomal_S11"/>
    <property type="match status" value="1"/>
</dbReference>
<dbReference type="PIRSF" id="PIRSF002131">
    <property type="entry name" value="Ribosomal_S11"/>
    <property type="match status" value="1"/>
</dbReference>
<dbReference type="SUPFAM" id="SSF53137">
    <property type="entry name" value="Translational machinery components"/>
    <property type="match status" value="1"/>
</dbReference>
<dbReference type="PROSITE" id="PS00054">
    <property type="entry name" value="RIBOSOMAL_S11"/>
    <property type="match status" value="1"/>
</dbReference>
<proteinExistence type="inferred from homology"/>
<keyword id="KW-1185">Reference proteome</keyword>
<keyword id="KW-0687">Ribonucleoprotein</keyword>
<keyword id="KW-0689">Ribosomal protein</keyword>
<keyword id="KW-0694">RNA-binding</keyword>
<keyword id="KW-0699">rRNA-binding</keyword>
<organism>
    <name type="scientific">Kosmotoga olearia (strain ATCC BAA-1733 / DSM 21960 / TBF 19.5.1)</name>
    <dbReference type="NCBI Taxonomy" id="521045"/>
    <lineage>
        <taxon>Bacteria</taxon>
        <taxon>Thermotogati</taxon>
        <taxon>Thermotogota</taxon>
        <taxon>Thermotogae</taxon>
        <taxon>Kosmotogales</taxon>
        <taxon>Kosmotogaceae</taxon>
        <taxon>Kosmotoga</taxon>
    </lineage>
</organism>
<evidence type="ECO:0000255" key="1">
    <source>
        <dbReference type="HAMAP-Rule" id="MF_01310"/>
    </source>
</evidence>
<evidence type="ECO:0000305" key="2"/>
<comment type="function">
    <text evidence="1">Located on the platform of the 30S subunit, it bridges several disparate RNA helices of the 16S rRNA. Forms part of the Shine-Dalgarno cleft in the 70S ribosome.</text>
</comment>
<comment type="subunit">
    <text evidence="1">Part of the 30S ribosomal subunit. Interacts with proteins S7 and S18. Binds to IF-3.</text>
</comment>
<comment type="similarity">
    <text evidence="1">Belongs to the universal ribosomal protein uS11 family.</text>
</comment>
<protein>
    <recommendedName>
        <fullName evidence="1">Small ribosomal subunit protein uS11</fullName>
    </recommendedName>
    <alternativeName>
        <fullName evidence="2">30S ribosomal protein S11</fullName>
    </alternativeName>
</protein>
<name>RS11_KOSOT</name>
<feature type="chain" id="PRO_1000214366" description="Small ribosomal subunit protein uS11">
    <location>
        <begin position="1"/>
        <end position="130"/>
    </location>
</feature>
<accession>C5CGH6</accession>
<reference key="1">
    <citation type="submission" date="2009-06" db="EMBL/GenBank/DDBJ databases">
        <title>Complete sequence of Thermotogales bacterium TBF 19.5.1.</title>
        <authorList>
            <consortium name="US DOE Joint Genome Institute"/>
            <person name="Lucas S."/>
            <person name="Copeland A."/>
            <person name="Lapidus A."/>
            <person name="Glavina del Rio T."/>
            <person name="Tice H."/>
            <person name="Bruce D."/>
            <person name="Goodwin L."/>
            <person name="Pitluck S."/>
            <person name="Chertkov O."/>
            <person name="Brettin T."/>
            <person name="Detter J.C."/>
            <person name="Han C."/>
            <person name="Schmutz J."/>
            <person name="Larimer F."/>
            <person name="Land M."/>
            <person name="Hauser L."/>
            <person name="Kyrpides N."/>
            <person name="Ovchinnikova G."/>
            <person name="Noll K."/>
        </authorList>
    </citation>
    <scope>NUCLEOTIDE SEQUENCE [LARGE SCALE GENOMIC DNA]</scope>
    <source>
        <strain>ATCC BAA-1733 / DSM 21960 / TBF 19.5.1</strain>
    </source>
</reference>
<gene>
    <name evidence="1" type="primary">rpsK</name>
    <name type="ordered locus">Kole_1876</name>
</gene>